<comment type="function">
    <text>Serine/threonine-protein kinase that may function as a signaling receptor of extracellular matrix component. Binding to pectin may have significance in the control of cell expansion, morphogenesis and development.</text>
</comment>
<comment type="catalytic activity">
    <reaction>
        <text>L-seryl-[protein] + ATP = O-phospho-L-seryl-[protein] + ADP + H(+)</text>
        <dbReference type="Rhea" id="RHEA:17989"/>
        <dbReference type="Rhea" id="RHEA-COMP:9863"/>
        <dbReference type="Rhea" id="RHEA-COMP:11604"/>
        <dbReference type="ChEBI" id="CHEBI:15378"/>
        <dbReference type="ChEBI" id="CHEBI:29999"/>
        <dbReference type="ChEBI" id="CHEBI:30616"/>
        <dbReference type="ChEBI" id="CHEBI:83421"/>
        <dbReference type="ChEBI" id="CHEBI:456216"/>
    </reaction>
</comment>
<comment type="catalytic activity">
    <reaction>
        <text>L-threonyl-[protein] + ATP = O-phospho-L-threonyl-[protein] + ADP + H(+)</text>
        <dbReference type="Rhea" id="RHEA:46608"/>
        <dbReference type="Rhea" id="RHEA-COMP:11060"/>
        <dbReference type="Rhea" id="RHEA-COMP:11605"/>
        <dbReference type="ChEBI" id="CHEBI:15378"/>
        <dbReference type="ChEBI" id="CHEBI:30013"/>
        <dbReference type="ChEBI" id="CHEBI:30616"/>
        <dbReference type="ChEBI" id="CHEBI:61977"/>
        <dbReference type="ChEBI" id="CHEBI:456216"/>
    </reaction>
</comment>
<comment type="subcellular location">
    <subcellularLocation>
        <location evidence="7">Membrane</location>
        <topology evidence="7">Single-pass type I membrane protein</topology>
    </subcellularLocation>
</comment>
<comment type="tissue specificity">
    <text evidence="6">Predominantly expressed in green tissues such as stems and leaves.</text>
</comment>
<comment type="induction">
    <text evidence="6">Induced by INA.</text>
</comment>
<comment type="similarity">
    <text evidence="4">Belongs to the protein kinase superfamily. Ser/Thr protein kinase family.</text>
</comment>
<comment type="sequence caution" evidence="7">
    <conflict type="erroneous gene model prediction">
        <sequence resource="EMBL-CDS" id="AAF81358"/>
    </conflict>
</comment>
<gene>
    <name type="primary">WAK3</name>
    <name type="ordered locus">At1g21240</name>
    <name type="ORF">F16F4.8</name>
</gene>
<sequence length="741" mass="82701">MKFQEGVFLVVIFFLAYTQLVKGQHQPREDCKLKCGNVTIEYPFGISTGCYYPGDDNFNLTCVVEEKLLLFGIIQVTNISHSGHVSVLFERFSECYEQKNETNGTALGYQLGSSFSLSSNNKFTLVGCNALSLLSTFGKQNYSTGCLSLCNSQPEANGRCNGVGCCTTEDFSVPFDSDTFQFGSVRLRNQVNNSLDLFNTSVYQFNPCTYAFLVEDGKFNFDSSKDLKNLRNVTRFPVALDWSIGNQTCEQAGSTRICGKNSSCYNSTTRNGYICKCNEGYDGNPYRSEGCKDIDECISDTHNCSDPKTCRNRDGGFDCKCPSGYDLNSSMSCTRPEYKRTRIFLVIIIGVLVLLLAAICIQHATKQRKYTKLRRQFFEQNGGGMLIQRLSGAGLSNIDFKIFTEEGMKEATNGYDESRILGQGGQGTVYKGILPDNTIVAIKKARLADSRQVDQFIHEVLVLSQINHRNVVKILGCCLETEVPLLVYEFITNGTLFDHLHGSIFDSSLTWEHRLRIAIEVAGTLAYLHSSASIPIIHRDIKTANILLDENLTAKVADFGASKLIPMDKEQLTTMVQGTLGYLDPEYYTTGLLNEKSDVYSFGVVLMELLSGQKALCFERPQASKHLVSYFVSATEENRLHEIIDDQVLNEDNLKEIQEAARIAAECTRLMGEERPRMKEVAAKLEALRVEKTKHKWSDQYPEENEHLIGGHILSAQGETSSSIGYDSIKNVAILDIETGR</sequence>
<protein>
    <recommendedName>
        <fullName>Wall-associated receptor kinase 3</fullName>
        <ecNumber>2.7.11.-</ecNumber>
    </recommendedName>
</protein>
<organism>
    <name type="scientific">Arabidopsis thaliana</name>
    <name type="common">Mouse-ear cress</name>
    <dbReference type="NCBI Taxonomy" id="3702"/>
    <lineage>
        <taxon>Eukaryota</taxon>
        <taxon>Viridiplantae</taxon>
        <taxon>Streptophyta</taxon>
        <taxon>Embryophyta</taxon>
        <taxon>Tracheophyta</taxon>
        <taxon>Spermatophyta</taxon>
        <taxon>Magnoliopsida</taxon>
        <taxon>eudicotyledons</taxon>
        <taxon>Gunneridae</taxon>
        <taxon>Pentapetalae</taxon>
        <taxon>rosids</taxon>
        <taxon>malvids</taxon>
        <taxon>Brassicales</taxon>
        <taxon>Brassicaceae</taxon>
        <taxon>Camelineae</taxon>
        <taxon>Arabidopsis</taxon>
    </lineage>
</organism>
<keyword id="KW-0067">ATP-binding</keyword>
<keyword id="KW-0106">Calcium</keyword>
<keyword id="KW-1015">Disulfide bond</keyword>
<keyword id="KW-0245">EGF-like domain</keyword>
<keyword id="KW-0325">Glycoprotein</keyword>
<keyword id="KW-0418">Kinase</keyword>
<keyword id="KW-0472">Membrane</keyword>
<keyword id="KW-0547">Nucleotide-binding</keyword>
<keyword id="KW-0597">Phosphoprotein</keyword>
<keyword id="KW-1185">Reference proteome</keyword>
<keyword id="KW-0677">Repeat</keyword>
<keyword id="KW-0723">Serine/threonine-protein kinase</keyword>
<keyword id="KW-0732">Signal</keyword>
<keyword id="KW-0808">Transferase</keyword>
<keyword id="KW-0812">Transmembrane</keyword>
<keyword id="KW-1133">Transmembrane helix</keyword>
<proteinExistence type="evidence at transcript level"/>
<evidence type="ECO:0000250" key="1">
    <source>
        <dbReference type="UniProtKB" id="O48814"/>
    </source>
</evidence>
<evidence type="ECO:0000255" key="2"/>
<evidence type="ECO:0000255" key="3">
    <source>
        <dbReference type="PROSITE-ProRule" id="PRU00076"/>
    </source>
</evidence>
<evidence type="ECO:0000255" key="4">
    <source>
        <dbReference type="PROSITE-ProRule" id="PRU00159"/>
    </source>
</evidence>
<evidence type="ECO:0000255" key="5">
    <source>
        <dbReference type="PROSITE-ProRule" id="PRU10027"/>
    </source>
</evidence>
<evidence type="ECO:0000269" key="6">
    <source>
    </source>
</evidence>
<evidence type="ECO:0000305" key="7"/>
<feature type="signal peptide" evidence="2">
    <location>
        <begin position="1"/>
        <end position="23"/>
    </location>
</feature>
<feature type="chain" id="PRO_0000253302" description="Wall-associated receptor kinase 3">
    <location>
        <begin position="24"/>
        <end position="741"/>
    </location>
</feature>
<feature type="topological domain" description="Extracellular" evidence="2">
    <location>
        <begin position="24"/>
        <end position="342"/>
    </location>
</feature>
<feature type="transmembrane region" description="Helical" evidence="2">
    <location>
        <begin position="343"/>
        <end position="363"/>
    </location>
</feature>
<feature type="topological domain" description="Cytoplasmic" evidence="2">
    <location>
        <begin position="364"/>
        <end position="741"/>
    </location>
</feature>
<feature type="domain" description="EGF-like 1" evidence="3">
    <location>
        <begin position="245"/>
        <end position="292"/>
    </location>
</feature>
<feature type="domain" description="EGF-like 2; calcium-binding" evidence="3">
    <location>
        <begin position="293"/>
        <end position="334"/>
    </location>
</feature>
<feature type="domain" description="Protein kinase" evidence="4">
    <location>
        <begin position="415"/>
        <end position="698"/>
    </location>
</feature>
<feature type="active site" description="Proton acceptor" evidence="4 5">
    <location>
        <position position="540"/>
    </location>
</feature>
<feature type="binding site" evidence="4">
    <location>
        <begin position="421"/>
        <end position="429"/>
    </location>
    <ligand>
        <name>ATP</name>
        <dbReference type="ChEBI" id="CHEBI:30616"/>
    </ligand>
</feature>
<feature type="binding site" evidence="4">
    <location>
        <position position="443"/>
    </location>
    <ligand>
        <name>ATP</name>
        <dbReference type="ChEBI" id="CHEBI:30616"/>
    </ligand>
</feature>
<feature type="modified residue" description="Phosphothreonine" evidence="1">
    <location>
        <position position="404"/>
    </location>
</feature>
<feature type="modified residue" description="Phosphotyrosine" evidence="1">
    <location>
        <position position="488"/>
    </location>
</feature>
<feature type="modified residue" description="Phosphothreonine" evidence="1">
    <location>
        <position position="574"/>
    </location>
</feature>
<feature type="modified residue" description="Phosphothreonine" evidence="1">
    <location>
        <position position="579"/>
    </location>
</feature>
<feature type="modified residue" description="Phosphotyrosine" evidence="1">
    <location>
        <position position="587"/>
    </location>
</feature>
<feature type="glycosylation site" description="N-linked (GlcNAc...) asparagine" evidence="2">
    <location>
        <position position="37"/>
    </location>
</feature>
<feature type="glycosylation site" description="N-linked (GlcNAc...) asparagine" evidence="2">
    <location>
        <position position="59"/>
    </location>
</feature>
<feature type="glycosylation site" description="N-linked (GlcNAc...) asparagine" evidence="2">
    <location>
        <position position="78"/>
    </location>
</feature>
<feature type="glycosylation site" description="N-linked (GlcNAc...) asparagine" evidence="2">
    <location>
        <position position="100"/>
    </location>
</feature>
<feature type="glycosylation site" description="N-linked (GlcNAc...) asparagine" evidence="2">
    <location>
        <position position="103"/>
    </location>
</feature>
<feature type="glycosylation site" description="N-linked (GlcNAc...) asparagine" evidence="2">
    <location>
        <position position="141"/>
    </location>
</feature>
<feature type="glycosylation site" description="N-linked (GlcNAc...) asparagine" evidence="2">
    <location>
        <position position="192"/>
    </location>
</feature>
<feature type="glycosylation site" description="N-linked (GlcNAc...) asparagine" evidence="2">
    <location>
        <position position="199"/>
    </location>
</feature>
<feature type="glycosylation site" description="N-linked (GlcNAc...) asparagine" evidence="2">
    <location>
        <position position="232"/>
    </location>
</feature>
<feature type="glycosylation site" description="N-linked (GlcNAc...) asparagine" evidence="2">
    <location>
        <position position="246"/>
    </location>
</feature>
<feature type="glycosylation site" description="N-linked (GlcNAc...) asparagine" evidence="2">
    <location>
        <position position="261"/>
    </location>
</feature>
<feature type="glycosylation site" description="N-linked (GlcNAc...) asparagine" evidence="2">
    <location>
        <position position="266"/>
    </location>
</feature>
<feature type="glycosylation site" description="N-linked (GlcNAc...) asparagine" evidence="2">
    <location>
        <position position="303"/>
    </location>
</feature>
<feature type="glycosylation site" description="N-linked (GlcNAc...) asparagine" evidence="2">
    <location>
        <position position="328"/>
    </location>
</feature>
<feature type="disulfide bond" evidence="3">
    <location>
        <begin position="249"/>
        <end position="264"/>
    </location>
</feature>
<feature type="disulfide bond" evidence="3">
    <location>
        <begin position="258"/>
        <end position="275"/>
    </location>
</feature>
<feature type="disulfide bond" evidence="3">
    <location>
        <begin position="277"/>
        <end position="291"/>
    </location>
</feature>
<feature type="disulfide bond" evidence="3">
    <location>
        <begin position="297"/>
        <end position="310"/>
    </location>
</feature>
<feature type="disulfide bond" evidence="3">
    <location>
        <begin position="304"/>
        <end position="319"/>
    </location>
</feature>
<feature type="disulfide bond" evidence="3">
    <location>
        <begin position="321"/>
        <end position="333"/>
    </location>
</feature>
<accession>Q9LMN8</accession>
<reference key="1">
    <citation type="journal article" date="2000" name="Nature">
        <title>Sequence and analysis of chromosome 1 of the plant Arabidopsis thaliana.</title>
        <authorList>
            <person name="Theologis A."/>
            <person name="Ecker J.R."/>
            <person name="Palm C.J."/>
            <person name="Federspiel N.A."/>
            <person name="Kaul S."/>
            <person name="White O."/>
            <person name="Alonso J."/>
            <person name="Altafi H."/>
            <person name="Araujo R."/>
            <person name="Bowman C.L."/>
            <person name="Brooks S.Y."/>
            <person name="Buehler E."/>
            <person name="Chan A."/>
            <person name="Chao Q."/>
            <person name="Chen H."/>
            <person name="Cheuk R.F."/>
            <person name="Chin C.W."/>
            <person name="Chung M.K."/>
            <person name="Conn L."/>
            <person name="Conway A.B."/>
            <person name="Conway A.R."/>
            <person name="Creasy T.H."/>
            <person name="Dewar K."/>
            <person name="Dunn P."/>
            <person name="Etgu P."/>
            <person name="Feldblyum T.V."/>
            <person name="Feng J.-D."/>
            <person name="Fong B."/>
            <person name="Fujii C.Y."/>
            <person name="Gill J.E."/>
            <person name="Goldsmith A.D."/>
            <person name="Haas B."/>
            <person name="Hansen N.F."/>
            <person name="Hughes B."/>
            <person name="Huizar L."/>
            <person name="Hunter J.L."/>
            <person name="Jenkins J."/>
            <person name="Johnson-Hopson C."/>
            <person name="Khan S."/>
            <person name="Khaykin E."/>
            <person name="Kim C.J."/>
            <person name="Koo H.L."/>
            <person name="Kremenetskaia I."/>
            <person name="Kurtz D.B."/>
            <person name="Kwan A."/>
            <person name="Lam B."/>
            <person name="Langin-Hooper S."/>
            <person name="Lee A."/>
            <person name="Lee J.M."/>
            <person name="Lenz C.A."/>
            <person name="Li J.H."/>
            <person name="Li Y.-P."/>
            <person name="Lin X."/>
            <person name="Liu S.X."/>
            <person name="Liu Z.A."/>
            <person name="Luros J.S."/>
            <person name="Maiti R."/>
            <person name="Marziali A."/>
            <person name="Militscher J."/>
            <person name="Miranda M."/>
            <person name="Nguyen M."/>
            <person name="Nierman W.C."/>
            <person name="Osborne B.I."/>
            <person name="Pai G."/>
            <person name="Peterson J."/>
            <person name="Pham P.K."/>
            <person name="Rizzo M."/>
            <person name="Rooney T."/>
            <person name="Rowley D."/>
            <person name="Sakano H."/>
            <person name="Salzberg S.L."/>
            <person name="Schwartz J.R."/>
            <person name="Shinn P."/>
            <person name="Southwick A.M."/>
            <person name="Sun H."/>
            <person name="Tallon L.J."/>
            <person name="Tambunga G."/>
            <person name="Toriumi M.J."/>
            <person name="Town C.D."/>
            <person name="Utterback T."/>
            <person name="Van Aken S."/>
            <person name="Vaysberg M."/>
            <person name="Vysotskaia V.S."/>
            <person name="Walker M."/>
            <person name="Wu D."/>
            <person name="Yu G."/>
            <person name="Fraser C.M."/>
            <person name="Venter J.C."/>
            <person name="Davis R.W."/>
        </authorList>
    </citation>
    <scope>NUCLEOTIDE SEQUENCE [LARGE SCALE GENOMIC DNA]</scope>
    <source>
        <strain>cv. Columbia</strain>
    </source>
</reference>
<reference key="2">
    <citation type="journal article" date="2017" name="Plant J.">
        <title>Araport11: a complete reannotation of the Arabidopsis thaliana reference genome.</title>
        <authorList>
            <person name="Cheng C.Y."/>
            <person name="Krishnakumar V."/>
            <person name="Chan A.P."/>
            <person name="Thibaud-Nissen F."/>
            <person name="Schobel S."/>
            <person name="Town C.D."/>
        </authorList>
    </citation>
    <scope>GENOME REANNOTATION</scope>
    <source>
        <strain>cv. Columbia</strain>
    </source>
</reference>
<reference key="3">
    <citation type="journal article" date="1999" name="Plant Mol. Biol.">
        <title>A cluster of five cell wall-associated receptor kinase genes, Wak1-5, are expressed in specific organs of Arabidopsis.</title>
        <authorList>
            <person name="He Z.-H."/>
            <person name="Cheeseman I."/>
            <person name="He D."/>
            <person name="Kohorn B.D."/>
        </authorList>
    </citation>
    <scope>TISSUE SPECIFICITY</scope>
    <scope>INDUCTION</scope>
</reference>
<reference key="4">
    <citation type="journal article" date="2002" name="Plant Physiol.">
        <title>The cell wall-associated kinase (WAK) and WAK-like kinase gene family.</title>
        <authorList>
            <person name="Verica J.A."/>
            <person name="He Z.-H."/>
        </authorList>
    </citation>
    <scope>GENE FAMILY ORGANIZATION</scope>
</reference>
<name>WAK3_ARATH</name>
<dbReference type="EC" id="2.7.11.-"/>
<dbReference type="EMBL" id="AC036104">
    <property type="protein sequence ID" value="AAF81358.1"/>
    <property type="status" value="ALT_SEQ"/>
    <property type="molecule type" value="Genomic_DNA"/>
</dbReference>
<dbReference type="EMBL" id="CP002684">
    <property type="protein sequence ID" value="AEE30077.1"/>
    <property type="molecule type" value="Genomic_DNA"/>
</dbReference>
<dbReference type="PIR" id="F86345">
    <property type="entry name" value="F86345"/>
</dbReference>
<dbReference type="RefSeq" id="NP_173547.1">
    <property type="nucleotide sequence ID" value="NM_101977.2"/>
</dbReference>
<dbReference type="SMR" id="Q9LMN8"/>
<dbReference type="BioGRID" id="23958">
    <property type="interactions" value="152"/>
</dbReference>
<dbReference type="IntAct" id="Q9LMN8">
    <property type="interactions" value="153"/>
</dbReference>
<dbReference type="STRING" id="3702.Q9LMN8"/>
<dbReference type="GlyCosmos" id="Q9LMN8">
    <property type="glycosylation" value="14 sites, No reported glycans"/>
</dbReference>
<dbReference type="GlyGen" id="Q9LMN8">
    <property type="glycosylation" value="14 sites"/>
</dbReference>
<dbReference type="iPTMnet" id="Q9LMN8"/>
<dbReference type="PaxDb" id="3702-AT1G21240.1"/>
<dbReference type="ProteomicsDB" id="242674"/>
<dbReference type="EnsemblPlants" id="AT1G21240.1">
    <property type="protein sequence ID" value="AT1G21240.1"/>
    <property type="gene ID" value="AT1G21240"/>
</dbReference>
<dbReference type="GeneID" id="838719"/>
<dbReference type="Gramene" id="AT1G21240.1">
    <property type="protein sequence ID" value="AT1G21240.1"/>
    <property type="gene ID" value="AT1G21240"/>
</dbReference>
<dbReference type="KEGG" id="ath:AT1G21240"/>
<dbReference type="Araport" id="AT1G21240"/>
<dbReference type="TAIR" id="AT1G21240">
    <property type="gene designation" value="WAK3"/>
</dbReference>
<dbReference type="eggNOG" id="ENOG502QQPF">
    <property type="taxonomic scope" value="Eukaryota"/>
</dbReference>
<dbReference type="HOGENOM" id="CLU_000288_43_5_1"/>
<dbReference type="InParanoid" id="Q9LMN8"/>
<dbReference type="OMA" id="SMETTRI"/>
<dbReference type="PhylomeDB" id="Q9LMN8"/>
<dbReference type="PRO" id="PR:Q9LMN8"/>
<dbReference type="Proteomes" id="UP000006548">
    <property type="component" value="Chromosome 1"/>
</dbReference>
<dbReference type="ExpressionAtlas" id="Q9LMN8">
    <property type="expression patterns" value="baseline and differential"/>
</dbReference>
<dbReference type="GO" id="GO:0016020">
    <property type="term" value="C:membrane"/>
    <property type="evidence" value="ECO:0007669"/>
    <property type="project" value="UniProtKB-SubCell"/>
</dbReference>
<dbReference type="GO" id="GO:0005524">
    <property type="term" value="F:ATP binding"/>
    <property type="evidence" value="ECO:0007669"/>
    <property type="project" value="UniProtKB-KW"/>
</dbReference>
<dbReference type="GO" id="GO:0005509">
    <property type="term" value="F:calcium ion binding"/>
    <property type="evidence" value="ECO:0007669"/>
    <property type="project" value="InterPro"/>
</dbReference>
<dbReference type="GO" id="GO:0030247">
    <property type="term" value="F:polysaccharide binding"/>
    <property type="evidence" value="ECO:0007669"/>
    <property type="project" value="InterPro"/>
</dbReference>
<dbReference type="GO" id="GO:0106310">
    <property type="term" value="F:protein serine kinase activity"/>
    <property type="evidence" value="ECO:0007669"/>
    <property type="project" value="RHEA"/>
</dbReference>
<dbReference type="GO" id="GO:0004674">
    <property type="term" value="F:protein serine/threonine kinase activity"/>
    <property type="evidence" value="ECO:0007669"/>
    <property type="project" value="UniProtKB-KW"/>
</dbReference>
<dbReference type="GO" id="GO:0007166">
    <property type="term" value="P:cell surface receptor signaling pathway"/>
    <property type="evidence" value="ECO:0007669"/>
    <property type="project" value="InterPro"/>
</dbReference>
<dbReference type="CDD" id="cd00054">
    <property type="entry name" value="EGF_CA"/>
    <property type="match status" value="1"/>
</dbReference>
<dbReference type="CDD" id="cd14066">
    <property type="entry name" value="STKc_IRAK"/>
    <property type="match status" value="1"/>
</dbReference>
<dbReference type="FunFam" id="2.10.25.10:FF:000038">
    <property type="entry name" value="Fibrillin 2"/>
    <property type="match status" value="1"/>
</dbReference>
<dbReference type="FunFam" id="1.10.510.10:FF:000084">
    <property type="entry name" value="Wall-associated receptor kinase 2"/>
    <property type="match status" value="1"/>
</dbReference>
<dbReference type="FunFam" id="3.30.200.20:FF:000043">
    <property type="entry name" value="Wall-associated receptor kinase 2"/>
    <property type="match status" value="1"/>
</dbReference>
<dbReference type="Gene3D" id="2.10.25.10">
    <property type="entry name" value="Laminin"/>
    <property type="match status" value="2"/>
</dbReference>
<dbReference type="Gene3D" id="3.30.200.20">
    <property type="entry name" value="Phosphorylase Kinase, domain 1"/>
    <property type="match status" value="1"/>
</dbReference>
<dbReference type="Gene3D" id="1.10.510.10">
    <property type="entry name" value="Transferase(Phosphotransferase) domain 1"/>
    <property type="match status" value="1"/>
</dbReference>
<dbReference type="InterPro" id="IPR001881">
    <property type="entry name" value="EGF-like_Ca-bd_dom"/>
</dbReference>
<dbReference type="InterPro" id="IPR000742">
    <property type="entry name" value="EGF-like_dom"/>
</dbReference>
<dbReference type="InterPro" id="IPR000152">
    <property type="entry name" value="EGF-type_Asp/Asn_hydroxyl_site"/>
</dbReference>
<dbReference type="InterPro" id="IPR018097">
    <property type="entry name" value="EGF_Ca-bd_CS"/>
</dbReference>
<dbReference type="InterPro" id="IPR011009">
    <property type="entry name" value="Kinase-like_dom_sf"/>
</dbReference>
<dbReference type="InterPro" id="IPR049883">
    <property type="entry name" value="NOTCH1_EGF-like"/>
</dbReference>
<dbReference type="InterPro" id="IPR000719">
    <property type="entry name" value="Prot_kinase_dom"/>
</dbReference>
<dbReference type="InterPro" id="IPR001245">
    <property type="entry name" value="Ser-Thr/Tyr_kinase_cat_dom"/>
</dbReference>
<dbReference type="InterPro" id="IPR008271">
    <property type="entry name" value="Ser/Thr_kinase_AS"/>
</dbReference>
<dbReference type="InterPro" id="IPR045274">
    <property type="entry name" value="WAK-like"/>
</dbReference>
<dbReference type="InterPro" id="IPR025287">
    <property type="entry name" value="WAK_GUB"/>
</dbReference>
<dbReference type="PANTHER" id="PTHR27005:SF511">
    <property type="entry name" value="WALL-ASSOCIATED RECEPTOR KINASE 1-RELATED"/>
    <property type="match status" value="1"/>
</dbReference>
<dbReference type="PANTHER" id="PTHR27005">
    <property type="entry name" value="WALL-ASSOCIATED RECEPTOR KINASE-LIKE 21"/>
    <property type="match status" value="1"/>
</dbReference>
<dbReference type="Pfam" id="PF07645">
    <property type="entry name" value="EGF_CA"/>
    <property type="match status" value="1"/>
</dbReference>
<dbReference type="Pfam" id="PF13947">
    <property type="entry name" value="GUB_WAK_bind"/>
    <property type="match status" value="1"/>
</dbReference>
<dbReference type="Pfam" id="PF07714">
    <property type="entry name" value="PK_Tyr_Ser-Thr"/>
    <property type="match status" value="1"/>
</dbReference>
<dbReference type="SMART" id="SM00181">
    <property type="entry name" value="EGF"/>
    <property type="match status" value="2"/>
</dbReference>
<dbReference type="SMART" id="SM00179">
    <property type="entry name" value="EGF_CA"/>
    <property type="match status" value="1"/>
</dbReference>
<dbReference type="SMART" id="SM00220">
    <property type="entry name" value="S_TKc"/>
    <property type="match status" value="1"/>
</dbReference>
<dbReference type="SUPFAM" id="SSF57196">
    <property type="entry name" value="EGF/Laminin"/>
    <property type="match status" value="1"/>
</dbReference>
<dbReference type="SUPFAM" id="SSF56112">
    <property type="entry name" value="Protein kinase-like (PK-like)"/>
    <property type="match status" value="1"/>
</dbReference>
<dbReference type="PROSITE" id="PS00010">
    <property type="entry name" value="ASX_HYDROXYL"/>
    <property type="match status" value="1"/>
</dbReference>
<dbReference type="PROSITE" id="PS01186">
    <property type="entry name" value="EGF_2"/>
    <property type="match status" value="1"/>
</dbReference>
<dbReference type="PROSITE" id="PS50026">
    <property type="entry name" value="EGF_3"/>
    <property type="match status" value="2"/>
</dbReference>
<dbReference type="PROSITE" id="PS01187">
    <property type="entry name" value="EGF_CA"/>
    <property type="match status" value="1"/>
</dbReference>
<dbReference type="PROSITE" id="PS50011">
    <property type="entry name" value="PROTEIN_KINASE_DOM"/>
    <property type="match status" value="1"/>
</dbReference>
<dbReference type="PROSITE" id="PS00108">
    <property type="entry name" value="PROTEIN_KINASE_ST"/>
    <property type="match status" value="1"/>
</dbReference>